<comment type="function">
    <text evidence="1">Actin-binding protein involved in motile and morphological processes. Inhibits actin polymerization, likely by sequestering G-actin (By similarity).</text>
</comment>
<comment type="subunit">
    <text evidence="1">Interacts with G-actin; ADP-actin form.</text>
</comment>
<comment type="subcellular location">
    <subcellularLocation>
        <location evidence="1">Cytoplasm</location>
        <location evidence="1">Cytoskeleton</location>
    </subcellularLocation>
</comment>
<comment type="similarity">
    <text evidence="4">Belongs to the actin-binding proteins ADF family. Twinfilin subfamily.</text>
</comment>
<comment type="online information" name="Protein Spotlight">
    <link uri="https://www.proteinspotlight.org/back_issues/073"/>
    <text>Molecular embrace - Issue 73 of August 2006</text>
</comment>
<protein>
    <recommendedName>
        <fullName>Twinfilin-1</fullName>
    </recommendedName>
</protein>
<keyword id="KW-0009">Actin-binding</keyword>
<keyword id="KW-0963">Cytoplasm</keyword>
<keyword id="KW-0206">Cytoskeleton</keyword>
<keyword id="KW-1185">Reference proteome</keyword>
<keyword id="KW-0677">Repeat</keyword>
<name>TWF1_XENTR</name>
<evidence type="ECO:0000250" key="1"/>
<evidence type="ECO:0000255" key="2">
    <source>
        <dbReference type="PROSITE-ProRule" id="PRU00599"/>
    </source>
</evidence>
<evidence type="ECO:0000256" key="3">
    <source>
        <dbReference type="SAM" id="MobiDB-lite"/>
    </source>
</evidence>
<evidence type="ECO:0000305" key="4"/>
<gene>
    <name type="primary">twf1</name>
</gene>
<feature type="chain" id="PRO_0000232408" description="Twinfilin-1">
    <location>
        <begin position="1"/>
        <end position="350"/>
    </location>
</feature>
<feature type="domain" description="ADF-H 1" evidence="2">
    <location>
        <begin position="4"/>
        <end position="139"/>
    </location>
</feature>
<feature type="domain" description="ADF-H 2" evidence="2">
    <location>
        <begin position="177"/>
        <end position="313"/>
    </location>
</feature>
<feature type="region of interest" description="Disordered" evidence="3">
    <location>
        <begin position="316"/>
        <end position="350"/>
    </location>
</feature>
<organism>
    <name type="scientific">Xenopus tropicalis</name>
    <name type="common">Western clawed frog</name>
    <name type="synonym">Silurana tropicalis</name>
    <dbReference type="NCBI Taxonomy" id="8364"/>
    <lineage>
        <taxon>Eukaryota</taxon>
        <taxon>Metazoa</taxon>
        <taxon>Chordata</taxon>
        <taxon>Craniata</taxon>
        <taxon>Vertebrata</taxon>
        <taxon>Euteleostomi</taxon>
        <taxon>Amphibia</taxon>
        <taxon>Batrachia</taxon>
        <taxon>Anura</taxon>
        <taxon>Pipoidea</taxon>
        <taxon>Pipidae</taxon>
        <taxon>Xenopodinae</taxon>
        <taxon>Xenopus</taxon>
        <taxon>Silurana</taxon>
    </lineage>
</organism>
<proteinExistence type="evidence at transcript level"/>
<sequence>MSHQTGIQASEDVLEMFARARNGKYRLLKLDIEDEQLTVTACEKPASSWEQEYDSLILPLLEDKQPCYIMYRLDSQNAQGFEWIFIAWSPDHSHVRQKMLYAATRATVKKEFGGGHIKEELFGTVKDDISLKGYYKYLACQSSPAPLTMAEEELRQIKIKETQVDIGVDTKHQTLQGIAFPIEKAAFQALEQLREKRLNYVQLKIDIKNETIILADTTNTEVRDLPKRIPKDAARYHFFLYKHSHEGDYLDSFVFIYSMPGYTCSIRERMLYSSCKSPLLDVIENRLLMEIARKIEIDNGDELTPDFLYEEVHPKQHAHKQNFAKPKGPAGKRGIRRLIRGPAEAETAND</sequence>
<reference key="1">
    <citation type="submission" date="2004-12" db="EMBL/GenBank/DDBJ databases">
        <authorList>
            <consortium name="NIH - Xenopus Gene Collection (XGC) project"/>
        </authorList>
    </citation>
    <scope>NUCLEOTIDE SEQUENCE [LARGE SCALE MRNA]</scope>
    <source>
        <tissue>Embryo</tissue>
    </source>
</reference>
<accession>Q5I082</accession>
<dbReference type="EMBL" id="BC088597">
    <property type="protein sequence ID" value="AAH88597.1"/>
    <property type="molecule type" value="mRNA"/>
</dbReference>
<dbReference type="RefSeq" id="NP_001011469.1">
    <property type="nucleotide sequence ID" value="NM_001011469.1"/>
</dbReference>
<dbReference type="SMR" id="Q5I082"/>
<dbReference type="FunCoup" id="Q5I082">
    <property type="interactions" value="1396"/>
</dbReference>
<dbReference type="STRING" id="8364.ENSXETP00000002726"/>
<dbReference type="PaxDb" id="8364-ENSXETP00000060892"/>
<dbReference type="GeneID" id="496960"/>
<dbReference type="KEGG" id="xtr:496960"/>
<dbReference type="AGR" id="Xenbase:XB-GENE-489056"/>
<dbReference type="CTD" id="5756"/>
<dbReference type="Xenbase" id="XB-GENE-489056">
    <property type="gene designation" value="twf1"/>
</dbReference>
<dbReference type="eggNOG" id="KOG1747">
    <property type="taxonomic scope" value="Eukaryota"/>
</dbReference>
<dbReference type="HOGENOM" id="CLU_031995_1_0_1"/>
<dbReference type="InParanoid" id="Q5I082"/>
<dbReference type="OMA" id="YLFKHTH"/>
<dbReference type="OrthoDB" id="10006997at2759"/>
<dbReference type="PhylomeDB" id="Q5I082"/>
<dbReference type="Reactome" id="R-XTR-9013418">
    <property type="pathway name" value="RHOBTB2 GTPase cycle"/>
</dbReference>
<dbReference type="Proteomes" id="UP000008143">
    <property type="component" value="Chromosome 3"/>
</dbReference>
<dbReference type="Bgee" id="ENSXETG00000026830">
    <property type="expression patterns" value="Expressed in ovary and 15 other cell types or tissues"/>
</dbReference>
<dbReference type="GO" id="GO:0005737">
    <property type="term" value="C:cytoplasm"/>
    <property type="evidence" value="ECO:0007669"/>
    <property type="project" value="UniProtKB-KW"/>
</dbReference>
<dbReference type="GO" id="GO:0005856">
    <property type="term" value="C:cytoskeleton"/>
    <property type="evidence" value="ECO:0007669"/>
    <property type="project" value="UniProtKB-SubCell"/>
</dbReference>
<dbReference type="GO" id="GO:0003779">
    <property type="term" value="F:actin binding"/>
    <property type="evidence" value="ECO:0007669"/>
    <property type="project" value="UniProtKB-KW"/>
</dbReference>
<dbReference type="GO" id="GO:0030837">
    <property type="term" value="P:negative regulation of actin filament polymerization"/>
    <property type="evidence" value="ECO:0007669"/>
    <property type="project" value="InterPro"/>
</dbReference>
<dbReference type="CDD" id="cd11284">
    <property type="entry name" value="ADF_Twf-C_like"/>
    <property type="match status" value="1"/>
</dbReference>
<dbReference type="CDD" id="cd11285">
    <property type="entry name" value="ADF_Twf-N_like"/>
    <property type="match status" value="1"/>
</dbReference>
<dbReference type="FunFam" id="3.40.20.10:FF:000007">
    <property type="entry name" value="Twinfilin-1 isoform 1"/>
    <property type="match status" value="1"/>
</dbReference>
<dbReference type="FunFam" id="3.40.20.10:FF:000012">
    <property type="entry name" value="Twinfilin-1 isoform 1"/>
    <property type="match status" value="1"/>
</dbReference>
<dbReference type="Gene3D" id="3.40.20.10">
    <property type="entry name" value="Severin"/>
    <property type="match status" value="2"/>
</dbReference>
<dbReference type="InterPro" id="IPR002108">
    <property type="entry name" value="ADF-H"/>
</dbReference>
<dbReference type="InterPro" id="IPR029006">
    <property type="entry name" value="ADF-H/Gelsolin-like_dom_sf"/>
</dbReference>
<dbReference type="InterPro" id="IPR028458">
    <property type="entry name" value="Twinfilin"/>
</dbReference>
<dbReference type="PANTHER" id="PTHR13759">
    <property type="entry name" value="TWINFILIN"/>
    <property type="match status" value="1"/>
</dbReference>
<dbReference type="PANTHER" id="PTHR13759:SF8">
    <property type="entry name" value="TWINFILIN-1"/>
    <property type="match status" value="1"/>
</dbReference>
<dbReference type="Pfam" id="PF00241">
    <property type="entry name" value="Cofilin_ADF"/>
    <property type="match status" value="2"/>
</dbReference>
<dbReference type="SMART" id="SM00102">
    <property type="entry name" value="ADF"/>
    <property type="match status" value="2"/>
</dbReference>
<dbReference type="SUPFAM" id="SSF55753">
    <property type="entry name" value="Actin depolymerizing proteins"/>
    <property type="match status" value="2"/>
</dbReference>
<dbReference type="PROSITE" id="PS51263">
    <property type="entry name" value="ADF_H"/>
    <property type="match status" value="2"/>
</dbReference>